<keyword id="KW-0963">Cytoplasm</keyword>
<keyword id="KW-0418">Kinase</keyword>
<keyword id="KW-0479">Metal-binding</keyword>
<keyword id="KW-0597">Phosphoprotein</keyword>
<keyword id="KW-0598">Phosphotransferase system</keyword>
<keyword id="KW-1185">Reference proteome</keyword>
<keyword id="KW-0762">Sugar transport</keyword>
<keyword id="KW-0808">Transferase</keyword>
<keyword id="KW-0813">Transport</keyword>
<keyword id="KW-0862">Zinc</keyword>
<gene>
    <name type="primary">crr</name>
    <name type="ordered locus">c2952</name>
</gene>
<reference key="1">
    <citation type="journal article" date="2002" name="Proc. Natl. Acad. Sci. U.S.A.">
        <title>Extensive mosaic structure revealed by the complete genome sequence of uropathogenic Escherichia coli.</title>
        <authorList>
            <person name="Welch R.A."/>
            <person name="Burland V."/>
            <person name="Plunkett G. III"/>
            <person name="Redford P."/>
            <person name="Roesch P."/>
            <person name="Rasko D."/>
            <person name="Buckles E.L."/>
            <person name="Liou S.-R."/>
            <person name="Boutin A."/>
            <person name="Hackett J."/>
            <person name="Stroud D."/>
            <person name="Mayhew G.F."/>
            <person name="Rose D.J."/>
            <person name="Zhou S."/>
            <person name="Schwartz D.C."/>
            <person name="Perna N.T."/>
            <person name="Mobley H.L.T."/>
            <person name="Donnenberg M.S."/>
            <person name="Blattner F.R."/>
        </authorList>
    </citation>
    <scope>NUCLEOTIDE SEQUENCE [LARGE SCALE GENOMIC DNA]</scope>
    <source>
        <strain>CFT073 / ATCC 700928 / UPEC</strain>
    </source>
</reference>
<organism>
    <name type="scientific">Escherichia coli O6:H1 (strain CFT073 / ATCC 700928 / UPEC)</name>
    <dbReference type="NCBI Taxonomy" id="199310"/>
    <lineage>
        <taxon>Bacteria</taxon>
        <taxon>Pseudomonadati</taxon>
        <taxon>Pseudomonadota</taxon>
        <taxon>Gammaproteobacteria</taxon>
        <taxon>Enterobacterales</taxon>
        <taxon>Enterobacteriaceae</taxon>
        <taxon>Escherichia</taxon>
    </lineage>
</organism>
<dbReference type="EMBL" id="AE014075">
    <property type="protein sequence ID" value="AAN81402.1"/>
    <property type="molecule type" value="Genomic_DNA"/>
</dbReference>
<dbReference type="RefSeq" id="WP_000522247.1">
    <property type="nucleotide sequence ID" value="NZ_CP051263.1"/>
</dbReference>
<dbReference type="BMRB" id="P69784"/>
<dbReference type="SMR" id="P69784"/>
<dbReference type="MINT" id="P69784"/>
<dbReference type="STRING" id="199310.c2952"/>
<dbReference type="GeneID" id="93774714"/>
<dbReference type="KEGG" id="ecc:c2952"/>
<dbReference type="eggNOG" id="COG2190">
    <property type="taxonomic scope" value="Bacteria"/>
</dbReference>
<dbReference type="HOGENOM" id="CLU_012312_5_1_6"/>
<dbReference type="BioCyc" id="ECOL199310:C2952-MONOMER"/>
<dbReference type="Proteomes" id="UP000001410">
    <property type="component" value="Chromosome"/>
</dbReference>
<dbReference type="GO" id="GO:0005737">
    <property type="term" value="C:cytoplasm"/>
    <property type="evidence" value="ECO:0007669"/>
    <property type="project" value="UniProtKB-SubCell"/>
</dbReference>
<dbReference type="GO" id="GO:0016301">
    <property type="term" value="F:kinase activity"/>
    <property type="evidence" value="ECO:0007669"/>
    <property type="project" value="UniProtKB-KW"/>
</dbReference>
<dbReference type="GO" id="GO:0046872">
    <property type="term" value="F:metal ion binding"/>
    <property type="evidence" value="ECO:0007669"/>
    <property type="project" value="UniProtKB-KW"/>
</dbReference>
<dbReference type="GO" id="GO:0009401">
    <property type="term" value="P:phosphoenolpyruvate-dependent sugar phosphotransferase system"/>
    <property type="evidence" value="ECO:0007669"/>
    <property type="project" value="UniProtKB-KW"/>
</dbReference>
<dbReference type="CDD" id="cd00210">
    <property type="entry name" value="PTS_IIA_glc"/>
    <property type="match status" value="1"/>
</dbReference>
<dbReference type="FunFam" id="2.70.70.10:FF:000001">
    <property type="entry name" value="PTS system glucose-specific IIA component"/>
    <property type="match status" value="1"/>
</dbReference>
<dbReference type="Gene3D" id="2.70.70.10">
    <property type="entry name" value="Glucose Permease (Domain IIA)"/>
    <property type="match status" value="1"/>
</dbReference>
<dbReference type="InterPro" id="IPR011055">
    <property type="entry name" value="Dup_hybrid_motif"/>
</dbReference>
<dbReference type="InterPro" id="IPR001127">
    <property type="entry name" value="PTS_EIIA_1_perm"/>
</dbReference>
<dbReference type="InterPro" id="IPR050890">
    <property type="entry name" value="PTS_EIIA_component"/>
</dbReference>
<dbReference type="NCBIfam" id="NF006962">
    <property type="entry name" value="PRK09439.1"/>
    <property type="match status" value="1"/>
</dbReference>
<dbReference type="NCBIfam" id="TIGR00830">
    <property type="entry name" value="PTBA"/>
    <property type="match status" value="1"/>
</dbReference>
<dbReference type="PANTHER" id="PTHR45008">
    <property type="entry name" value="PTS SYSTEM GLUCOSE-SPECIFIC EIIA COMPONENT"/>
    <property type="match status" value="1"/>
</dbReference>
<dbReference type="PANTHER" id="PTHR45008:SF1">
    <property type="entry name" value="PTS SYSTEM GLUCOSE-SPECIFIC EIIA COMPONENT"/>
    <property type="match status" value="1"/>
</dbReference>
<dbReference type="Pfam" id="PF00358">
    <property type="entry name" value="PTS_EIIA_1"/>
    <property type="match status" value="1"/>
</dbReference>
<dbReference type="SUPFAM" id="SSF51261">
    <property type="entry name" value="Duplicated hybrid motif"/>
    <property type="match status" value="1"/>
</dbReference>
<dbReference type="PROSITE" id="PS51093">
    <property type="entry name" value="PTS_EIIA_TYPE_1"/>
    <property type="match status" value="1"/>
</dbReference>
<dbReference type="PROSITE" id="PS00371">
    <property type="entry name" value="PTS_EIIA_TYPE_1_HIS"/>
    <property type="match status" value="1"/>
</dbReference>
<proteinExistence type="inferred from homology"/>
<name>PTGA_ECOL6</name>
<sequence>MGLFDKLKSLVSDDKKDTGTIEIIAPLSGEIVNIEDVPDVVFAEKIVGDGIAIKPTGNKMVAPVDGTIGKIFETNHAFSIESDSGVELFVHFGIDTVELKGEGFKRIAEEGQRVKVGDTVIEFDLPLLEEKAKSTLTPVVISNMDEIKELIKLSGSVTVGETPVIRIKK</sequence>
<feature type="initiator methionine" description="Removed" evidence="1">
    <location>
        <position position="1"/>
    </location>
</feature>
<feature type="chain" id="PRO_0000186533" description="PTS system glucose-specific EIIA component">
    <location>
        <begin position="2"/>
        <end position="169"/>
    </location>
</feature>
<feature type="domain" description="PTS EIIA type-1" evidence="2">
    <location>
        <begin position="39"/>
        <end position="143"/>
    </location>
</feature>
<feature type="active site" description="Tele-phosphohistidine intermediate; for EIIA activity" evidence="1 2">
    <location>
        <position position="91"/>
    </location>
</feature>
<feature type="binding site" evidence="1">
    <location>
        <position position="76"/>
    </location>
    <ligand>
        <name>Zn(2+)</name>
        <dbReference type="ChEBI" id="CHEBI:29105"/>
        <note>ligand shared with glycerol kinase</note>
    </ligand>
</feature>
<feature type="binding site" evidence="1">
    <location>
        <position position="91"/>
    </location>
    <ligand>
        <name>Zn(2+)</name>
        <dbReference type="ChEBI" id="CHEBI:29105"/>
        <note>ligand shared with glycerol kinase</note>
    </ligand>
</feature>
<feature type="site" description="Important for phospho-donor activity" evidence="1">
    <location>
        <position position="76"/>
    </location>
</feature>
<feature type="modified residue" description="Phosphohistidine; by HPr" evidence="1">
    <location>
        <position position="91"/>
    </location>
</feature>
<comment type="function">
    <text evidence="1">The phosphoenolpyruvate-dependent sugar phosphotransferase system (sugar PTS), a major carbohydrate active transport system, catalyzes the phosphorylation of incoming sugar substrates concomitantly with their translocation across the cell membrane. The enzyme II complex composed of PtsG and Crr is involved in glucose transport.</text>
</comment>
<comment type="cofactor">
    <cofactor evidence="1">
        <name>Zn(2+)</name>
        <dbReference type="ChEBI" id="CHEBI:29105"/>
    </cofactor>
    <text evidence="1">Binds 1 zinc ion per glycerol kinase EIIA-Glc dimer. The zinc ion is important for dimerization.</text>
</comment>
<comment type="subunit">
    <text evidence="1">Heterodimer with glycerol kinase (glpk).</text>
</comment>
<comment type="subcellular location">
    <subcellularLocation>
        <location evidence="3">Cytoplasm</location>
    </subcellularLocation>
</comment>
<comment type="domain">
    <text evidence="2">The EIIA domain is phosphorylated by phospho-HPr on a histidyl residue. Then, it transfers the phosphoryl group to the EIIB domain.</text>
</comment>
<evidence type="ECO:0000250" key="1">
    <source>
        <dbReference type="UniProtKB" id="P69783"/>
    </source>
</evidence>
<evidence type="ECO:0000255" key="2">
    <source>
        <dbReference type="PROSITE-ProRule" id="PRU00416"/>
    </source>
</evidence>
<evidence type="ECO:0000305" key="3"/>
<protein>
    <recommendedName>
        <fullName evidence="1">PTS system glucose-specific EIIA component</fullName>
    </recommendedName>
    <alternativeName>
        <fullName evidence="1">EIIA-Glc</fullName>
    </alternativeName>
    <alternativeName>
        <fullName evidence="1">EIII-Glc</fullName>
    </alternativeName>
    <alternativeName>
        <fullName evidence="1">Glucose-specific phosphotransferase enzyme IIA component</fullName>
    </alternativeName>
</protein>
<accession>P69784</accession>
<accession>P08837</accession>
<accession>Q47703</accession>